<comment type="function">
    <text evidence="1">Member of the two-component regulatory system SaeR/SaeS involved in the regulation of staphylococcal virulence factors in a strain-dependent fashion. Probably functions as a membrane-associated protein kinase that upon sensing the appropriate signal, autophosphorylates and in turn activates the cytosolic response regulator SaeR (By similarity).</text>
</comment>
<comment type="catalytic activity">
    <reaction>
        <text>ATP + protein L-histidine = ADP + protein N-phospho-L-histidine.</text>
        <dbReference type="EC" id="2.7.13.3"/>
    </reaction>
</comment>
<comment type="subcellular location">
    <subcellularLocation>
        <location evidence="1">Cell membrane</location>
        <topology evidence="1">Multi-pass membrane protein</topology>
    </subcellularLocation>
</comment>
<comment type="PTM">
    <text evidence="1">Autophosphorylated.</text>
</comment>
<keyword id="KW-0067">ATP-binding</keyword>
<keyword id="KW-1003">Cell membrane</keyword>
<keyword id="KW-0418">Kinase</keyword>
<keyword id="KW-0472">Membrane</keyword>
<keyword id="KW-0547">Nucleotide-binding</keyword>
<keyword id="KW-0597">Phosphoprotein</keyword>
<keyword id="KW-0808">Transferase</keyword>
<keyword id="KW-0812">Transmembrane</keyword>
<keyword id="KW-1133">Transmembrane helix</keyword>
<keyword id="KW-0902">Two-component regulatory system</keyword>
<keyword id="KW-0843">Virulence</keyword>
<sequence length="351" mass="39728">MVLSIRSQIIIGVVSSILLTSTILAIAYILMWFNGHMTLTLTLTTIITSCLTLLICSIFINPLIQKIKQFNIKTKQFANGNYASNDKTFNSPKEIYELNQSFNKMASEITQQMNQIKSEQQEKTELIQNLAHDLKTPLASIISYSEGLRDGIITKDHEIKESYDILIKQANRLSTLFDDMTHIITLNTGKTYPPELIQLDQLLVSILQPYEQRIKHENRTLEVNFCSEIDAFYQYRTPLERILTNLLDNALKFSNVGSRIDINISENKDQDTIDIAISDEGIGIIPELQERIFERTFRVENSRNTKTGGSGLGLYIANELAQQNNAKISVSSDIDVGTTMTVTLHKLDITT</sequence>
<reference key="1">
    <citation type="journal article" date="2004" name="Proc. Natl. Acad. Sci. U.S.A.">
        <title>Complete genomes of two clinical Staphylococcus aureus strains: evidence for the rapid evolution of virulence and drug resistance.</title>
        <authorList>
            <person name="Holden M.T.G."/>
            <person name="Feil E.J."/>
            <person name="Lindsay J.A."/>
            <person name="Peacock S.J."/>
            <person name="Day N.P.J."/>
            <person name="Enright M.C."/>
            <person name="Foster T.J."/>
            <person name="Moore C.E."/>
            <person name="Hurst L."/>
            <person name="Atkin R."/>
            <person name="Barron A."/>
            <person name="Bason N."/>
            <person name="Bentley S.D."/>
            <person name="Chillingworth C."/>
            <person name="Chillingworth T."/>
            <person name="Churcher C."/>
            <person name="Clark L."/>
            <person name="Corton C."/>
            <person name="Cronin A."/>
            <person name="Doggett J."/>
            <person name="Dowd L."/>
            <person name="Feltwell T."/>
            <person name="Hance Z."/>
            <person name="Harris B."/>
            <person name="Hauser H."/>
            <person name="Holroyd S."/>
            <person name="Jagels K."/>
            <person name="James K.D."/>
            <person name="Lennard N."/>
            <person name="Line A."/>
            <person name="Mayes R."/>
            <person name="Moule S."/>
            <person name="Mungall K."/>
            <person name="Ormond D."/>
            <person name="Quail M.A."/>
            <person name="Rabbinowitsch E."/>
            <person name="Rutherford K.M."/>
            <person name="Sanders M."/>
            <person name="Sharp S."/>
            <person name="Simmonds M."/>
            <person name="Stevens K."/>
            <person name="Whitehead S."/>
            <person name="Barrell B.G."/>
            <person name="Spratt B.G."/>
            <person name="Parkhill J."/>
        </authorList>
    </citation>
    <scope>NUCLEOTIDE SEQUENCE [LARGE SCALE GENOMIC DNA]</scope>
    <source>
        <strain>MRSA252</strain>
    </source>
</reference>
<dbReference type="EC" id="2.7.13.3"/>
<dbReference type="EMBL" id="BX571856">
    <property type="protein sequence ID" value="CAG39768.1"/>
    <property type="molecule type" value="Genomic_DNA"/>
</dbReference>
<dbReference type="RefSeq" id="WP_000244416.1">
    <property type="nucleotide sequence ID" value="NC_002952.2"/>
</dbReference>
<dbReference type="SMR" id="Q6GIT7"/>
<dbReference type="KEGG" id="sar:SAR0758"/>
<dbReference type="HOGENOM" id="CLU_000445_89_3_9"/>
<dbReference type="Proteomes" id="UP000000596">
    <property type="component" value="Chromosome"/>
</dbReference>
<dbReference type="GO" id="GO:0005886">
    <property type="term" value="C:plasma membrane"/>
    <property type="evidence" value="ECO:0007669"/>
    <property type="project" value="UniProtKB-SubCell"/>
</dbReference>
<dbReference type="GO" id="GO:0005524">
    <property type="term" value="F:ATP binding"/>
    <property type="evidence" value="ECO:0007669"/>
    <property type="project" value="UniProtKB-KW"/>
</dbReference>
<dbReference type="GO" id="GO:0004721">
    <property type="term" value="F:phosphoprotein phosphatase activity"/>
    <property type="evidence" value="ECO:0007669"/>
    <property type="project" value="TreeGrafter"/>
</dbReference>
<dbReference type="GO" id="GO:0000155">
    <property type="term" value="F:phosphorelay sensor kinase activity"/>
    <property type="evidence" value="ECO:0007669"/>
    <property type="project" value="InterPro"/>
</dbReference>
<dbReference type="GO" id="GO:0016036">
    <property type="term" value="P:cellular response to phosphate starvation"/>
    <property type="evidence" value="ECO:0007669"/>
    <property type="project" value="TreeGrafter"/>
</dbReference>
<dbReference type="CDD" id="cd00075">
    <property type="entry name" value="HATPase"/>
    <property type="match status" value="1"/>
</dbReference>
<dbReference type="CDD" id="cd00082">
    <property type="entry name" value="HisKA"/>
    <property type="match status" value="1"/>
</dbReference>
<dbReference type="FunFam" id="1.10.287.130:FF:000077">
    <property type="entry name" value="Sensor histidine kinase SaeS"/>
    <property type="match status" value="1"/>
</dbReference>
<dbReference type="Gene3D" id="1.10.287.130">
    <property type="match status" value="1"/>
</dbReference>
<dbReference type="Gene3D" id="6.10.340.10">
    <property type="match status" value="1"/>
</dbReference>
<dbReference type="Gene3D" id="3.30.565.10">
    <property type="entry name" value="Histidine kinase-like ATPase, C-terminal domain"/>
    <property type="match status" value="1"/>
</dbReference>
<dbReference type="InterPro" id="IPR050351">
    <property type="entry name" value="2-comp_sensor_kinase"/>
</dbReference>
<dbReference type="InterPro" id="IPR003660">
    <property type="entry name" value="HAMP_dom"/>
</dbReference>
<dbReference type="InterPro" id="IPR036890">
    <property type="entry name" value="HATPase_C_sf"/>
</dbReference>
<dbReference type="InterPro" id="IPR005467">
    <property type="entry name" value="His_kinase_dom"/>
</dbReference>
<dbReference type="InterPro" id="IPR003661">
    <property type="entry name" value="HisK_dim/P_dom"/>
</dbReference>
<dbReference type="InterPro" id="IPR036097">
    <property type="entry name" value="HisK_dim/P_sf"/>
</dbReference>
<dbReference type="InterPro" id="IPR004358">
    <property type="entry name" value="Sig_transdc_His_kin-like_C"/>
</dbReference>
<dbReference type="PANTHER" id="PTHR45453">
    <property type="entry name" value="PHOSPHATE REGULON SENSOR PROTEIN PHOR"/>
    <property type="match status" value="1"/>
</dbReference>
<dbReference type="PANTHER" id="PTHR45453:SF1">
    <property type="entry name" value="PHOSPHATE REGULON SENSOR PROTEIN PHOR"/>
    <property type="match status" value="1"/>
</dbReference>
<dbReference type="Pfam" id="PF00672">
    <property type="entry name" value="HAMP"/>
    <property type="match status" value="1"/>
</dbReference>
<dbReference type="Pfam" id="PF02518">
    <property type="entry name" value="HATPase_c"/>
    <property type="match status" value="1"/>
</dbReference>
<dbReference type="Pfam" id="PF00512">
    <property type="entry name" value="HisKA"/>
    <property type="match status" value="1"/>
</dbReference>
<dbReference type="PRINTS" id="PR00344">
    <property type="entry name" value="BCTRLSENSOR"/>
</dbReference>
<dbReference type="SMART" id="SM00387">
    <property type="entry name" value="HATPase_c"/>
    <property type="match status" value="1"/>
</dbReference>
<dbReference type="SMART" id="SM00388">
    <property type="entry name" value="HisKA"/>
    <property type="match status" value="1"/>
</dbReference>
<dbReference type="SUPFAM" id="SSF55874">
    <property type="entry name" value="ATPase domain of HSP90 chaperone/DNA topoisomerase II/histidine kinase"/>
    <property type="match status" value="1"/>
</dbReference>
<dbReference type="SUPFAM" id="SSF47384">
    <property type="entry name" value="Homodimeric domain of signal transducing histidine kinase"/>
    <property type="match status" value="1"/>
</dbReference>
<dbReference type="PROSITE" id="PS50885">
    <property type="entry name" value="HAMP"/>
    <property type="match status" value="1"/>
</dbReference>
<dbReference type="PROSITE" id="PS50109">
    <property type="entry name" value="HIS_KIN"/>
    <property type="match status" value="1"/>
</dbReference>
<organism>
    <name type="scientific">Staphylococcus aureus (strain MRSA252)</name>
    <dbReference type="NCBI Taxonomy" id="282458"/>
    <lineage>
        <taxon>Bacteria</taxon>
        <taxon>Bacillati</taxon>
        <taxon>Bacillota</taxon>
        <taxon>Bacilli</taxon>
        <taxon>Bacillales</taxon>
        <taxon>Staphylococcaceae</taxon>
        <taxon>Staphylococcus</taxon>
    </lineage>
</organism>
<name>SAES_STAAR</name>
<proteinExistence type="inferred from homology"/>
<protein>
    <recommendedName>
        <fullName>Histidine protein kinase SaeS</fullName>
        <ecNumber>2.7.13.3</ecNumber>
    </recommendedName>
    <alternativeName>
        <fullName>Sensor protein SaeS</fullName>
    </alternativeName>
    <alternativeName>
        <fullName>Staphylococcus exoprotein expression protein S</fullName>
    </alternativeName>
</protein>
<feature type="chain" id="PRO_0000295932" description="Histidine protein kinase SaeS">
    <location>
        <begin position="1"/>
        <end position="351"/>
    </location>
</feature>
<feature type="transmembrane region" description="Helical" evidence="2">
    <location>
        <begin position="9"/>
        <end position="29"/>
    </location>
</feature>
<feature type="transmembrane region" description="Helical" evidence="2">
    <location>
        <begin position="40"/>
        <end position="60"/>
    </location>
</feature>
<feature type="domain" description="HAMP" evidence="3">
    <location>
        <begin position="61"/>
        <end position="114"/>
    </location>
</feature>
<feature type="domain" description="Histidine kinase" evidence="4">
    <location>
        <begin position="129"/>
        <end position="348"/>
    </location>
</feature>
<feature type="modified residue" description="Phosphohistidine; by autocatalysis" evidence="4">
    <location>
        <position position="132"/>
    </location>
</feature>
<evidence type="ECO:0000250" key="1"/>
<evidence type="ECO:0000255" key="2"/>
<evidence type="ECO:0000255" key="3">
    <source>
        <dbReference type="PROSITE-ProRule" id="PRU00102"/>
    </source>
</evidence>
<evidence type="ECO:0000255" key="4">
    <source>
        <dbReference type="PROSITE-ProRule" id="PRU00107"/>
    </source>
</evidence>
<accession>Q6GIT7</accession>
<gene>
    <name type="primary">saeS</name>
    <name type="ordered locus">SAR0758</name>
</gene>